<gene>
    <name type="primary">fliJ</name>
    <name type="ordered locus">BU077</name>
</gene>
<dbReference type="EMBL" id="BA000003">
    <property type="protein sequence ID" value="BAB12797.1"/>
    <property type="molecule type" value="Genomic_DNA"/>
</dbReference>
<dbReference type="RefSeq" id="NP_239911.1">
    <property type="nucleotide sequence ID" value="NC_002528.1"/>
</dbReference>
<dbReference type="RefSeq" id="WP_010895930.1">
    <property type="nucleotide sequence ID" value="NZ_AP036055.1"/>
</dbReference>
<dbReference type="SMR" id="P57179"/>
<dbReference type="STRING" id="563178.BUAP5A_076"/>
<dbReference type="EnsemblBacteria" id="BAB12797">
    <property type="protein sequence ID" value="BAB12797"/>
    <property type="gene ID" value="BAB12797"/>
</dbReference>
<dbReference type="KEGG" id="buc:BU077"/>
<dbReference type="PATRIC" id="fig|107806.10.peg.83"/>
<dbReference type="eggNOG" id="COG2882">
    <property type="taxonomic scope" value="Bacteria"/>
</dbReference>
<dbReference type="HOGENOM" id="CLU_1764545_0_0_6"/>
<dbReference type="Proteomes" id="UP000001806">
    <property type="component" value="Chromosome"/>
</dbReference>
<dbReference type="GO" id="GO:0009288">
    <property type="term" value="C:bacterial-type flagellum"/>
    <property type="evidence" value="ECO:0007669"/>
    <property type="project" value="InterPro"/>
</dbReference>
<dbReference type="GO" id="GO:0005886">
    <property type="term" value="C:plasma membrane"/>
    <property type="evidence" value="ECO:0007669"/>
    <property type="project" value="UniProtKB-SubCell"/>
</dbReference>
<dbReference type="GO" id="GO:0044781">
    <property type="term" value="P:bacterial-type flagellum organization"/>
    <property type="evidence" value="ECO:0007669"/>
    <property type="project" value="UniProtKB-KW"/>
</dbReference>
<dbReference type="GO" id="GO:0071973">
    <property type="term" value="P:bacterial-type flagellum-dependent cell motility"/>
    <property type="evidence" value="ECO:0007669"/>
    <property type="project" value="InterPro"/>
</dbReference>
<dbReference type="GO" id="GO:0006935">
    <property type="term" value="P:chemotaxis"/>
    <property type="evidence" value="ECO:0007669"/>
    <property type="project" value="UniProtKB-KW"/>
</dbReference>
<dbReference type="GO" id="GO:0015031">
    <property type="term" value="P:protein transport"/>
    <property type="evidence" value="ECO:0007669"/>
    <property type="project" value="UniProtKB-KW"/>
</dbReference>
<dbReference type="Gene3D" id="1.10.287.1700">
    <property type="match status" value="1"/>
</dbReference>
<dbReference type="InterPro" id="IPR053716">
    <property type="entry name" value="Flag_assembly_chemotaxis_eff"/>
</dbReference>
<dbReference type="InterPro" id="IPR012823">
    <property type="entry name" value="Flagell_FliJ"/>
</dbReference>
<dbReference type="Pfam" id="PF02050">
    <property type="entry name" value="FliJ"/>
    <property type="match status" value="1"/>
</dbReference>
<evidence type="ECO:0000250" key="1"/>
<evidence type="ECO:0000305" key="2"/>
<proteinExistence type="inferred from homology"/>
<organism>
    <name type="scientific">Buchnera aphidicola subsp. Acyrthosiphon pisum (strain APS)</name>
    <name type="common">Acyrthosiphon pisum symbiotic bacterium</name>
    <dbReference type="NCBI Taxonomy" id="107806"/>
    <lineage>
        <taxon>Bacteria</taxon>
        <taxon>Pseudomonadati</taxon>
        <taxon>Pseudomonadota</taxon>
        <taxon>Gammaproteobacteria</taxon>
        <taxon>Enterobacterales</taxon>
        <taxon>Erwiniaceae</taxon>
        <taxon>Buchnera</taxon>
    </lineage>
</organism>
<accession>P57179</accession>
<keyword id="KW-1005">Bacterial flagellum biogenesis</keyword>
<keyword id="KW-1006">Bacterial flagellum protein export</keyword>
<keyword id="KW-1003">Cell membrane</keyword>
<keyword id="KW-0145">Chemotaxis</keyword>
<keyword id="KW-0472">Membrane</keyword>
<keyword id="KW-0653">Protein transport</keyword>
<keyword id="KW-1185">Reference proteome</keyword>
<keyword id="KW-0813">Transport</keyword>
<sequence length="145" mass="17593">MKHKTFSLLEKIEKKKIEKETIKIKNIYLHKKKHIKQLKLLSGYQQEYLRKIHDKLILGVSVHQWQNYNSFISVLEVIIQDNINTIKKDEKIIQESFKIWSKNQIQGNIWKHLNMIHKRKILRIKKIKDAIINDSHIQLKFFKKV</sequence>
<protein>
    <recommendedName>
        <fullName>Flagellar FliJ protein</fullName>
    </recommendedName>
</protein>
<name>FLIJ_BUCAI</name>
<feature type="chain" id="PRO_0000180897" description="Flagellar FliJ protein">
    <location>
        <begin position="1"/>
        <end position="145"/>
    </location>
</feature>
<reference key="1">
    <citation type="journal article" date="2000" name="Nature">
        <title>Genome sequence of the endocellular bacterial symbiont of aphids Buchnera sp. APS.</title>
        <authorList>
            <person name="Shigenobu S."/>
            <person name="Watanabe H."/>
            <person name="Hattori M."/>
            <person name="Sakaki Y."/>
            <person name="Ishikawa H."/>
        </authorList>
    </citation>
    <scope>NUCLEOTIDE SEQUENCE [LARGE SCALE GENOMIC DNA]</scope>
    <source>
        <strain>APS</strain>
    </source>
</reference>
<comment type="function">
    <text evidence="1">Flagellar protein that affects chemotactic events.</text>
</comment>
<comment type="subcellular location">
    <subcellularLocation>
        <location evidence="1">Cell membrane</location>
        <topology evidence="1">Peripheral membrane protein</topology>
        <orientation evidence="1">Cytoplasmic side</orientation>
    </subcellularLocation>
</comment>
<comment type="similarity">
    <text evidence="2">Belongs to the FliJ family.</text>
</comment>